<reference key="1">
    <citation type="submission" date="2004-11" db="EMBL/GenBank/DDBJ databases">
        <title>Complete genome sequence of Thermus thermophilus HB8.</title>
        <authorList>
            <person name="Masui R."/>
            <person name="Kurokawa K."/>
            <person name="Nakagawa N."/>
            <person name="Tokunaga F."/>
            <person name="Koyama Y."/>
            <person name="Shibata T."/>
            <person name="Oshima T."/>
            <person name="Yokoyama S."/>
            <person name="Yasunaga T."/>
            <person name="Kuramitsu S."/>
        </authorList>
    </citation>
    <scope>NUCLEOTIDE SEQUENCE [LARGE SCALE GENOMIC DNA]</scope>
    <source>
        <strain>ATCC 27634 / DSM 579 / HB8</strain>
    </source>
</reference>
<reference key="2">
    <citation type="journal article" date="2000" name="Biol. Chem.">
        <title>Identification of the 50S ribosomal proteins from the eubacterium Thermus thermophilus.</title>
        <authorList>
            <person name="Katsani K.R."/>
            <person name="Tsiboli P."/>
            <person name="Anagnostopoulos K."/>
            <person name="Urlaub H."/>
            <person name="Choli-Papadopoulou T."/>
        </authorList>
    </citation>
    <scope>PROTEIN SEQUENCE OF 1-23</scope>
    <source>
        <strain>ATCC 27634 / DSM 579 / HB8</strain>
    </source>
</reference>
<reference key="3">
    <citation type="journal article" date="2005" name="Proteomics">
        <title>Extending ribosomal protein identifications to unsequenced bacterial strains using matrix-assisted laser desorption/ionization mass spectrometry.</title>
        <authorList>
            <person name="Suh M.-J."/>
            <person name="Hamburg D.M."/>
            <person name="Gregory S.T."/>
            <person name="Dahlberg A.E."/>
            <person name="Limbach P.A."/>
        </authorList>
    </citation>
    <scope>MASS SPECTROMETRY</scope>
    <source>
        <strain>ATCC 27634 / DSM 579 / HB8</strain>
    </source>
</reference>
<reference key="4">
    <citation type="journal article" date="2001" name="Cell">
        <title>The path of messenger RNA through the ribosome.</title>
        <authorList>
            <person name="Yusupova G.Z."/>
            <person name="Yusupov M.M."/>
            <person name="Cate J.H.D."/>
            <person name="Noller H.F."/>
        </authorList>
    </citation>
    <scope>X-RAY CRYSTALLOGRAPHY (5.0 ANGSTROMS) OF THE RIBOSOME</scope>
</reference>
<reference key="5">
    <citation type="journal article" date="2001" name="Science">
        <title>Crystal structure of the ribosome at 5.5 A resolution.</title>
        <authorList>
            <person name="Yusupov M.M."/>
            <person name="Yusupova G.Z."/>
            <person name="Baucom A."/>
            <person name="Lieberman K."/>
            <person name="Earnest T.N."/>
            <person name="Cate J.H.D."/>
            <person name="Noller H.F."/>
        </authorList>
    </citation>
    <scope>X-RAY CRYSTALLOGRAPHY (5.5 ANGSTROMS) OF THE RIBOSOME</scope>
</reference>
<reference key="6">
    <citation type="journal article" date="2008" name="Science">
        <title>Insights into translational termination from the structure of RF2 bound to the ribosome.</title>
        <authorList>
            <person name="Weixlbaumer A."/>
            <person name="Jin H."/>
            <person name="Neubauer C."/>
            <person name="Voorhees R.M."/>
            <person name="Petry S."/>
            <person name="Kelley A.C."/>
            <person name="Ramakrishnan V."/>
        </authorList>
    </citation>
    <scope>X-RAY CRYSTALLOGRAPHY (3.45 ANGSTROMS) OF 70S RIBOSOME IN COMPLEX WITH RF2</scope>
    <scope>SUBUNIT</scope>
</reference>
<reference key="7">
    <citation type="journal article" date="2010" name="Proc. Natl. Acad. Sci. U.S.A.">
        <title>Structure of the 70S ribosome bound to release factor 2 and a substrate analog provides insights into catalysis of peptide release.</title>
        <authorList>
            <person name="Jin H."/>
            <person name="Kelley A.C."/>
            <person name="Loakes D."/>
            <person name="Ramakrishnan V."/>
        </authorList>
    </citation>
    <scope>X-RAY CRYSTALLOGRAPHY (3.10 ANGSTROMS) OF 70S RIBOSOME IN COMPLEX WITH RF2</scope>
    <scope>SUBUNIT</scope>
</reference>
<gene>
    <name evidence="2" type="primary">rplW</name>
    <name type="ordered locus">TTHA1690</name>
</gene>
<keyword id="KW-0002">3D-structure</keyword>
<keyword id="KW-0903">Direct protein sequencing</keyword>
<keyword id="KW-1185">Reference proteome</keyword>
<keyword id="KW-0687">Ribonucleoprotein</keyword>
<keyword id="KW-0689">Ribosomal protein</keyword>
<keyword id="KW-0694">RNA-binding</keyword>
<keyword id="KW-0699">rRNA-binding</keyword>
<proteinExistence type="evidence at protein level"/>
<protein>
    <recommendedName>
        <fullName evidence="2">Large ribosomal subunit protein uL23</fullName>
    </recommendedName>
    <alternativeName>
        <fullName evidence="4">50S ribosomal protein L23</fullName>
    </alternativeName>
</protein>
<name>RL23_THET8</name>
<evidence type="ECO:0000250" key="1"/>
<evidence type="ECO:0000255" key="2">
    <source>
        <dbReference type="HAMAP-Rule" id="MF_01369"/>
    </source>
</evidence>
<evidence type="ECO:0000269" key="3">
    <source>
    </source>
</evidence>
<evidence type="ECO:0000305" key="4"/>
<evidence type="ECO:0007829" key="5">
    <source>
        <dbReference type="PDB" id="4WT8"/>
    </source>
</evidence>
<accession>Q5SHP0</accession>
<sequence length="96" mass="10737">MKTAYDVILAPVLSEKAYAGFAEGKYTFWVHPKATKTEIKNAVETAFKVKVVKVNTLHVRGKKKRLGRYLGKRPDRKKAIVQVAPGQKIEALEGLI</sequence>
<comment type="function">
    <text evidence="2">One of the early assembly proteins it binds 23S rRNA. One of the proteins that surrounds the polypeptide exit tunnel on the outside of the ribosome. Forms the main docking site for trigger factor binding to the ribosome.</text>
</comment>
<comment type="subunit">
    <text evidence="1">Contacts protein L29, and trigger factor when it is bound to the ribosome (By similarity). Part of the 50S ribosomal subunit.</text>
</comment>
<comment type="mass spectrometry" mass="10737.0" method="MALDI" evidence="3"/>
<comment type="similarity">
    <text evidence="2">Belongs to the universal ribosomal protein uL23 family.</text>
</comment>
<organism>
    <name type="scientific">Thermus thermophilus (strain ATCC 27634 / DSM 579 / HB8)</name>
    <dbReference type="NCBI Taxonomy" id="300852"/>
    <lineage>
        <taxon>Bacteria</taxon>
        <taxon>Thermotogati</taxon>
        <taxon>Deinococcota</taxon>
        <taxon>Deinococci</taxon>
        <taxon>Thermales</taxon>
        <taxon>Thermaceae</taxon>
        <taxon>Thermus</taxon>
    </lineage>
</organism>
<dbReference type="EMBL" id="AP008226">
    <property type="protein sequence ID" value="BAD71513.1"/>
    <property type="molecule type" value="Genomic_DNA"/>
</dbReference>
<dbReference type="RefSeq" id="WP_008633421.1">
    <property type="nucleotide sequence ID" value="NC_006461.1"/>
</dbReference>
<dbReference type="RefSeq" id="YP_144956.1">
    <property type="nucleotide sequence ID" value="NC_006461.1"/>
</dbReference>
<dbReference type="PDB" id="1VVJ">
    <property type="method" value="X-ray"/>
    <property type="resolution" value="3.44 A"/>
    <property type="chains" value="RX/YX=1-96"/>
</dbReference>
<dbReference type="PDB" id="1VY4">
    <property type="method" value="X-ray"/>
    <property type="resolution" value="2.60 A"/>
    <property type="chains" value="BX/DX=1-96"/>
</dbReference>
<dbReference type="PDB" id="1VY5">
    <property type="method" value="X-ray"/>
    <property type="resolution" value="2.55 A"/>
    <property type="chains" value="BX/DX=1-96"/>
</dbReference>
<dbReference type="PDB" id="1VY6">
    <property type="method" value="X-ray"/>
    <property type="resolution" value="2.90 A"/>
    <property type="chains" value="BX/DX=1-96"/>
</dbReference>
<dbReference type="PDB" id="1VY7">
    <property type="method" value="X-ray"/>
    <property type="resolution" value="2.80 A"/>
    <property type="chains" value="BX/DX=1-96"/>
</dbReference>
<dbReference type="PDB" id="4L47">
    <property type="method" value="X-ray"/>
    <property type="resolution" value="3.22 A"/>
    <property type="chains" value="RX/YX=1-96"/>
</dbReference>
<dbReference type="PDB" id="4L71">
    <property type="method" value="X-ray"/>
    <property type="resolution" value="3.90 A"/>
    <property type="chains" value="RX/YX=1-96"/>
</dbReference>
<dbReference type="PDB" id="4LEL">
    <property type="method" value="X-ray"/>
    <property type="resolution" value="3.90 A"/>
    <property type="chains" value="RX/YX=1-96"/>
</dbReference>
<dbReference type="PDB" id="4LFZ">
    <property type="method" value="X-ray"/>
    <property type="resolution" value="3.92 A"/>
    <property type="chains" value="RX/YX=1-96"/>
</dbReference>
<dbReference type="PDB" id="4LNT">
    <property type="method" value="X-ray"/>
    <property type="resolution" value="2.94 A"/>
    <property type="chains" value="RX/YX=1-96"/>
</dbReference>
<dbReference type="PDB" id="4LSK">
    <property type="method" value="X-ray"/>
    <property type="resolution" value="3.48 A"/>
    <property type="chains" value="RX/YX=1-96"/>
</dbReference>
<dbReference type="PDB" id="4LT8">
    <property type="method" value="X-ray"/>
    <property type="resolution" value="3.14 A"/>
    <property type="chains" value="RX/YX=1-96"/>
</dbReference>
<dbReference type="PDB" id="4P6F">
    <property type="method" value="X-ray"/>
    <property type="resolution" value="3.60 A"/>
    <property type="chains" value="RX/YX=1-96"/>
</dbReference>
<dbReference type="PDB" id="4P70">
    <property type="method" value="X-ray"/>
    <property type="resolution" value="3.68 A"/>
    <property type="chains" value="RX/YX=1-96"/>
</dbReference>
<dbReference type="PDB" id="4TUA">
    <property type="method" value="X-ray"/>
    <property type="resolution" value="3.60 A"/>
    <property type="chains" value="RX/YX=1-96"/>
</dbReference>
<dbReference type="PDB" id="4TUB">
    <property type="method" value="X-ray"/>
    <property type="resolution" value="3.60 A"/>
    <property type="chains" value="RX/YX=1-96"/>
</dbReference>
<dbReference type="PDB" id="4TUC">
    <property type="method" value="X-ray"/>
    <property type="resolution" value="3.60 A"/>
    <property type="chains" value="RX/YX=1-96"/>
</dbReference>
<dbReference type="PDB" id="4TUD">
    <property type="method" value="X-ray"/>
    <property type="resolution" value="3.60 A"/>
    <property type="chains" value="RX/YX=1-96"/>
</dbReference>
<dbReference type="PDB" id="4TUE">
    <property type="method" value="X-ray"/>
    <property type="resolution" value="3.50 A"/>
    <property type="chains" value="RX/YX=1-96"/>
</dbReference>
<dbReference type="PDB" id="4V42">
    <property type="method" value="X-ray"/>
    <property type="resolution" value="5.50 A"/>
    <property type="chains" value="BT=1-96"/>
</dbReference>
<dbReference type="PDB" id="4V4P">
    <property type="method" value="X-ray"/>
    <property type="resolution" value="5.50 A"/>
    <property type="chains" value="T=1-96"/>
</dbReference>
<dbReference type="PDB" id="4V51">
    <property type="method" value="X-ray"/>
    <property type="resolution" value="2.80 A"/>
    <property type="chains" value="BX/DX=1-96"/>
</dbReference>
<dbReference type="PDB" id="4V5A">
    <property type="method" value="X-ray"/>
    <property type="resolution" value="3.50 A"/>
    <property type="chains" value="BX/DX=1-96"/>
</dbReference>
<dbReference type="PDB" id="4V5C">
    <property type="method" value="X-ray"/>
    <property type="resolution" value="3.30 A"/>
    <property type="chains" value="BX/DX=1-96"/>
</dbReference>
<dbReference type="PDB" id="4V5D">
    <property type="method" value="X-ray"/>
    <property type="resolution" value="3.50 A"/>
    <property type="chains" value="BX/DX=1-96"/>
</dbReference>
<dbReference type="PDB" id="4V5E">
    <property type="method" value="X-ray"/>
    <property type="resolution" value="3.45 A"/>
    <property type="chains" value="BX/DX=1-96"/>
</dbReference>
<dbReference type="PDB" id="4V5F">
    <property type="method" value="X-ray"/>
    <property type="resolution" value="3.60 A"/>
    <property type="chains" value="BX/DX=1-96"/>
</dbReference>
<dbReference type="PDB" id="4V5G">
    <property type="method" value="X-ray"/>
    <property type="resolution" value="3.60 A"/>
    <property type="chains" value="BX/DX=1-96"/>
</dbReference>
<dbReference type="PDB" id="4V5J">
    <property type="method" value="X-ray"/>
    <property type="resolution" value="3.10 A"/>
    <property type="chains" value="BX/DX=1-96"/>
</dbReference>
<dbReference type="PDB" id="4V5K">
    <property type="method" value="X-ray"/>
    <property type="resolution" value="3.20 A"/>
    <property type="chains" value="BX/DX=1-96"/>
</dbReference>
<dbReference type="PDB" id="4V5L">
    <property type="method" value="X-ray"/>
    <property type="resolution" value="3.10 A"/>
    <property type="chains" value="BX=1-96"/>
</dbReference>
<dbReference type="PDB" id="4V5M">
    <property type="method" value="EM"/>
    <property type="resolution" value="7.80 A"/>
    <property type="chains" value="BX=1-96"/>
</dbReference>
<dbReference type="PDB" id="4V5N">
    <property type="method" value="EM"/>
    <property type="resolution" value="7.60 A"/>
    <property type="chains" value="BX=1-96"/>
</dbReference>
<dbReference type="PDB" id="4V5P">
    <property type="method" value="X-ray"/>
    <property type="resolution" value="3.10 A"/>
    <property type="chains" value="BX/DX=1-96"/>
</dbReference>
<dbReference type="PDB" id="4V5Q">
    <property type="method" value="X-ray"/>
    <property type="resolution" value="3.10 A"/>
    <property type="chains" value="BX/DX=1-96"/>
</dbReference>
<dbReference type="PDB" id="4V5R">
    <property type="method" value="X-ray"/>
    <property type="resolution" value="3.10 A"/>
    <property type="chains" value="BX/DX=1-96"/>
</dbReference>
<dbReference type="PDB" id="4V5S">
    <property type="method" value="X-ray"/>
    <property type="resolution" value="3.10 A"/>
    <property type="chains" value="BX/DX=1-96"/>
</dbReference>
<dbReference type="PDB" id="4V68">
    <property type="method" value="EM"/>
    <property type="resolution" value="6.40 A"/>
    <property type="chains" value="BX=3-95"/>
</dbReference>
<dbReference type="PDB" id="4V6A">
    <property type="method" value="X-ray"/>
    <property type="resolution" value="3.10 A"/>
    <property type="chains" value="BX/DX=1-96"/>
</dbReference>
<dbReference type="PDB" id="4V6F">
    <property type="method" value="X-ray"/>
    <property type="resolution" value="3.10 A"/>
    <property type="chains" value="AT/DT=1-96"/>
</dbReference>
<dbReference type="PDB" id="4V6G">
    <property type="method" value="X-ray"/>
    <property type="resolution" value="3.50 A"/>
    <property type="chains" value="BT/DT=1-96"/>
</dbReference>
<dbReference type="PDB" id="4V7J">
    <property type="method" value="X-ray"/>
    <property type="resolution" value="3.30 A"/>
    <property type="chains" value="AX/BX=1-96"/>
</dbReference>
<dbReference type="PDB" id="4V7K">
    <property type="method" value="X-ray"/>
    <property type="resolution" value="3.60 A"/>
    <property type="chains" value="AX/BX=1-96"/>
</dbReference>
<dbReference type="PDB" id="4V7L">
    <property type="method" value="X-ray"/>
    <property type="resolution" value="3.00 A"/>
    <property type="chains" value="BX/DX=1-96"/>
</dbReference>
<dbReference type="PDB" id="4V7M">
    <property type="method" value="X-ray"/>
    <property type="resolution" value="3.45 A"/>
    <property type="chains" value="BX/DX=1-96"/>
</dbReference>
<dbReference type="PDB" id="4V7W">
    <property type="method" value="X-ray"/>
    <property type="resolution" value="3.00 A"/>
    <property type="chains" value="BX/DX=1-96"/>
</dbReference>
<dbReference type="PDB" id="4V7X">
    <property type="method" value="X-ray"/>
    <property type="resolution" value="3.00 A"/>
    <property type="chains" value="BX/DX=1-96"/>
</dbReference>
<dbReference type="PDB" id="4V7Y">
    <property type="method" value="X-ray"/>
    <property type="resolution" value="3.00 A"/>
    <property type="chains" value="BX/DX=1-96"/>
</dbReference>
<dbReference type="PDB" id="4V7Z">
    <property type="method" value="X-ray"/>
    <property type="resolution" value="3.10 A"/>
    <property type="chains" value="BX/DX=1-96"/>
</dbReference>
<dbReference type="PDB" id="4V87">
    <property type="method" value="X-ray"/>
    <property type="resolution" value="3.10 A"/>
    <property type="chains" value="AT/DT=3-94"/>
</dbReference>
<dbReference type="PDB" id="4V8A">
    <property type="method" value="X-ray"/>
    <property type="resolution" value="3.20 A"/>
    <property type="chains" value="AX/BX=1-96"/>
</dbReference>
<dbReference type="PDB" id="4V8B">
    <property type="method" value="X-ray"/>
    <property type="resolution" value="3.00 A"/>
    <property type="chains" value="BT/DT=1-96"/>
</dbReference>
<dbReference type="PDB" id="4V8C">
    <property type="method" value="X-ray"/>
    <property type="resolution" value="3.30 A"/>
    <property type="chains" value="AT/BT=1-96"/>
</dbReference>
<dbReference type="PDB" id="4V8D">
    <property type="method" value="X-ray"/>
    <property type="resolution" value="3.00 A"/>
    <property type="chains" value="BT/DT=1-96"/>
</dbReference>
<dbReference type="PDB" id="4V8E">
    <property type="method" value="X-ray"/>
    <property type="resolution" value="3.30 A"/>
    <property type="chains" value="AT/CT=1-96"/>
</dbReference>
<dbReference type="PDB" id="4V8F">
    <property type="method" value="X-ray"/>
    <property type="resolution" value="3.30 A"/>
    <property type="chains" value="AT/DT=1-96"/>
</dbReference>
<dbReference type="PDB" id="4V8G">
    <property type="method" value="X-ray"/>
    <property type="resolution" value="3.00 A"/>
    <property type="chains" value="BX/DX=1-96"/>
</dbReference>
<dbReference type="PDB" id="4V8H">
    <property type="method" value="X-ray"/>
    <property type="resolution" value="3.10 A"/>
    <property type="chains" value="BX/DX=1-96"/>
</dbReference>
<dbReference type="PDB" id="4V8I">
    <property type="method" value="X-ray"/>
    <property type="resolution" value="2.70 A"/>
    <property type="chains" value="BX/DX=1-96"/>
</dbReference>
<dbReference type="PDB" id="4V8J">
    <property type="method" value="X-ray"/>
    <property type="resolution" value="3.90 A"/>
    <property type="chains" value="BX/DX=1-96"/>
</dbReference>
<dbReference type="PDB" id="4V8N">
    <property type="method" value="X-ray"/>
    <property type="resolution" value="3.10 A"/>
    <property type="chains" value="BX/DX=1-96"/>
</dbReference>
<dbReference type="PDB" id="4V8O">
    <property type="method" value="X-ray"/>
    <property type="resolution" value="3.80 A"/>
    <property type="chains" value="BX=1-96"/>
</dbReference>
<dbReference type="PDB" id="4V8Q">
    <property type="method" value="X-ray"/>
    <property type="resolution" value="3.10 A"/>
    <property type="chains" value="AX=1-96"/>
</dbReference>
<dbReference type="PDB" id="4V8U">
    <property type="method" value="X-ray"/>
    <property type="resolution" value="3.70 A"/>
    <property type="chains" value="BX/DX=1-96"/>
</dbReference>
<dbReference type="PDB" id="4V8X">
    <property type="method" value="X-ray"/>
    <property type="resolution" value="3.35 A"/>
    <property type="chains" value="BX/DX=1-96"/>
</dbReference>
<dbReference type="PDB" id="4V90">
    <property type="method" value="X-ray"/>
    <property type="resolution" value="2.95 A"/>
    <property type="chains" value="BX=2-96"/>
</dbReference>
<dbReference type="PDB" id="4V95">
    <property type="method" value="X-ray"/>
    <property type="resolution" value="3.20 A"/>
    <property type="chains" value="BX/DX=1-96"/>
</dbReference>
<dbReference type="PDB" id="4V97">
    <property type="method" value="X-ray"/>
    <property type="resolution" value="3.52 A"/>
    <property type="chains" value="BX/DX=1-96"/>
</dbReference>
<dbReference type="PDB" id="4V9A">
    <property type="method" value="X-ray"/>
    <property type="resolution" value="3.30 A"/>
    <property type="chains" value="BT/DT=1-96"/>
</dbReference>
<dbReference type="PDB" id="4V9B">
    <property type="method" value="X-ray"/>
    <property type="resolution" value="3.10 A"/>
    <property type="chains" value="BT/DT=1-96"/>
</dbReference>
<dbReference type="PDB" id="4V9H">
    <property type="method" value="X-ray"/>
    <property type="resolution" value="2.86 A"/>
    <property type="chains" value="BX=1-96"/>
</dbReference>
<dbReference type="PDB" id="4V9I">
    <property type="method" value="X-ray"/>
    <property type="resolution" value="3.30 A"/>
    <property type="chains" value="BX/DX=3-94"/>
</dbReference>
<dbReference type="PDB" id="4V9R">
    <property type="method" value="X-ray"/>
    <property type="resolution" value="3.00 A"/>
    <property type="chains" value="BX/DX=1-96"/>
</dbReference>
<dbReference type="PDB" id="4V9S">
    <property type="method" value="X-ray"/>
    <property type="resolution" value="3.10 A"/>
    <property type="chains" value="BX/DX=1-96"/>
</dbReference>
<dbReference type="PDB" id="4W2E">
    <property type="method" value="X-ray"/>
    <property type="resolution" value="2.90 A"/>
    <property type="chains" value="X=1-96"/>
</dbReference>
<dbReference type="PDB" id="4W2F">
    <property type="method" value="X-ray"/>
    <property type="resolution" value="2.40 A"/>
    <property type="chains" value="BX/DX=1-96"/>
</dbReference>
<dbReference type="PDB" id="4W2G">
    <property type="method" value="X-ray"/>
    <property type="resolution" value="2.55 A"/>
    <property type="chains" value="BX/DX=1-96"/>
</dbReference>
<dbReference type="PDB" id="4W2H">
    <property type="method" value="X-ray"/>
    <property type="resolution" value="2.70 A"/>
    <property type="chains" value="BX/DX=1-96"/>
</dbReference>
<dbReference type="PDB" id="4W2I">
    <property type="method" value="X-ray"/>
    <property type="resolution" value="2.70 A"/>
    <property type="chains" value="BX/DX=1-96"/>
</dbReference>
<dbReference type="PDB" id="4W4G">
    <property type="method" value="X-ray"/>
    <property type="resolution" value="3.30 A"/>
    <property type="chains" value="RX/YX=1-96"/>
</dbReference>
<dbReference type="PDB" id="4WPO">
    <property type="method" value="X-ray"/>
    <property type="resolution" value="2.80 A"/>
    <property type="chains" value="AX/CX=1-96"/>
</dbReference>
<dbReference type="PDB" id="4WQ1">
    <property type="method" value="X-ray"/>
    <property type="resolution" value="3.10 A"/>
    <property type="chains" value="B5/F8=1-94"/>
</dbReference>
<dbReference type="PDB" id="4WQF">
    <property type="method" value="X-ray"/>
    <property type="resolution" value="2.80 A"/>
    <property type="chains" value="AX/CX=1-96"/>
</dbReference>
<dbReference type="PDB" id="4WQR">
    <property type="method" value="X-ray"/>
    <property type="resolution" value="3.15 A"/>
    <property type="chains" value="B5/F8=1-96"/>
</dbReference>
<dbReference type="PDB" id="4WQU">
    <property type="method" value="X-ray"/>
    <property type="resolution" value="2.80 A"/>
    <property type="chains" value="AX/CX=1-96"/>
</dbReference>
<dbReference type="PDB" id="4WQY">
    <property type="method" value="X-ray"/>
    <property type="resolution" value="2.80 A"/>
    <property type="chains" value="AX/CX=1-96"/>
</dbReference>
<dbReference type="PDB" id="4WR6">
    <property type="method" value="X-ray"/>
    <property type="resolution" value="3.05 A"/>
    <property type="chains" value="B5/F8=1-96"/>
</dbReference>
<dbReference type="PDB" id="4WRA">
    <property type="method" value="X-ray"/>
    <property type="resolution" value="3.05 A"/>
    <property type="chains" value="B5/F8=1-96"/>
</dbReference>
<dbReference type="PDB" id="4WRO">
    <property type="method" value="X-ray"/>
    <property type="resolution" value="3.05 A"/>
    <property type="chains" value="F8=1-96"/>
</dbReference>
<dbReference type="PDB" id="4WSD">
    <property type="method" value="X-ray"/>
    <property type="resolution" value="2.95 A"/>
    <property type="chains" value="B5/F8=1-96"/>
</dbReference>
<dbReference type="PDB" id="4WSM">
    <property type="method" value="X-ray"/>
    <property type="resolution" value="3.30 A"/>
    <property type="chains" value="B5/F8=1-96"/>
</dbReference>
<dbReference type="PDB" id="4WT1">
    <property type="method" value="X-ray"/>
    <property type="resolution" value="3.05 A"/>
    <property type="chains" value="B5/F8=1-96"/>
</dbReference>
<dbReference type="PDB" id="4WT8">
    <property type="method" value="X-ray"/>
    <property type="resolution" value="3.40 A"/>
    <property type="chains" value="CX/DX=3-94"/>
</dbReference>
<dbReference type="PDB" id="4WU1">
    <property type="method" value="X-ray"/>
    <property type="resolution" value="3.20 A"/>
    <property type="chains" value="B5/F8=1-96"/>
</dbReference>
<dbReference type="PDB" id="4WZD">
    <property type="method" value="X-ray"/>
    <property type="resolution" value="3.10 A"/>
    <property type="chains" value="B5/F8=1-96"/>
</dbReference>
<dbReference type="PDB" id="4WZO">
    <property type="method" value="X-ray"/>
    <property type="resolution" value="3.30 A"/>
    <property type="chains" value="B5/F8=1-96"/>
</dbReference>
<dbReference type="PDB" id="4Y4O">
    <property type="method" value="X-ray"/>
    <property type="resolution" value="2.30 A"/>
    <property type="chains" value="1X/2X=1-96"/>
</dbReference>
<dbReference type="PDB" id="4Y4P">
    <property type="method" value="X-ray"/>
    <property type="resolution" value="2.50 A"/>
    <property type="chains" value="1X/2X=1-96"/>
</dbReference>
<dbReference type="PDB" id="4YPB">
    <property type="method" value="X-ray"/>
    <property type="resolution" value="3.40 A"/>
    <property type="chains" value="RX/YX=1-96"/>
</dbReference>
<dbReference type="PDB" id="4YZV">
    <property type="method" value="X-ray"/>
    <property type="resolution" value="3.10 A"/>
    <property type="chains" value="RX/YX=1-96"/>
</dbReference>
<dbReference type="PDB" id="4Z3S">
    <property type="method" value="X-ray"/>
    <property type="resolution" value="2.65 A"/>
    <property type="chains" value="1X/2X=1-96"/>
</dbReference>
<dbReference type="PDB" id="4Z8C">
    <property type="method" value="X-ray"/>
    <property type="resolution" value="2.90 A"/>
    <property type="chains" value="1X/2X=1-96"/>
</dbReference>
<dbReference type="PDB" id="4ZER">
    <property type="method" value="X-ray"/>
    <property type="resolution" value="3.10 A"/>
    <property type="chains" value="1X/2X=1-95"/>
</dbReference>
<dbReference type="PDB" id="4ZSN">
    <property type="method" value="X-ray"/>
    <property type="resolution" value="3.60 A"/>
    <property type="chains" value="RX/YX=1-96"/>
</dbReference>
<dbReference type="PDB" id="5A9Z">
    <property type="method" value="EM"/>
    <property type="resolution" value="4.70 A"/>
    <property type="chains" value="AU=3-96"/>
</dbReference>
<dbReference type="PDB" id="5AA0">
    <property type="method" value="EM"/>
    <property type="resolution" value="5.00 A"/>
    <property type="chains" value="AU=3-96"/>
</dbReference>
<dbReference type="PDB" id="5CZP">
    <property type="method" value="X-ray"/>
    <property type="resolution" value="3.30 A"/>
    <property type="chains" value="RX/YX=1-96"/>
</dbReference>
<dbReference type="PDB" id="5D8B">
    <property type="method" value="X-ray"/>
    <property type="resolution" value="3.63 A"/>
    <property type="chains" value="NB/R=1-96"/>
</dbReference>
<dbReference type="PDB" id="5DFE">
    <property type="method" value="X-ray"/>
    <property type="resolution" value="3.10 A"/>
    <property type="chains" value="RX/YX=1-96"/>
</dbReference>
<dbReference type="PDB" id="5DOX">
    <property type="method" value="X-ray"/>
    <property type="resolution" value="3.10 A"/>
    <property type="chains" value="1X/2X=1-96"/>
</dbReference>
<dbReference type="PDB" id="5DOY">
    <property type="method" value="X-ray"/>
    <property type="resolution" value="2.60 A"/>
    <property type="chains" value="1X/2X=1-96"/>
</dbReference>
<dbReference type="PDB" id="5E7K">
    <property type="method" value="X-ray"/>
    <property type="resolution" value="3.20 A"/>
    <property type="chains" value="B5/F8=1-96"/>
</dbReference>
<dbReference type="PDB" id="5E81">
    <property type="method" value="X-ray"/>
    <property type="resolution" value="2.95 A"/>
    <property type="chains" value="B5/F8=1-96"/>
</dbReference>
<dbReference type="PDB" id="5EL4">
    <property type="method" value="X-ray"/>
    <property type="resolution" value="3.15 A"/>
    <property type="chains" value="B5/F8=1-96"/>
</dbReference>
<dbReference type="PDB" id="5EL5">
    <property type="method" value="X-ray"/>
    <property type="resolution" value="3.15 A"/>
    <property type="chains" value="B5/F8=1-96"/>
</dbReference>
<dbReference type="PDB" id="5EL6">
    <property type="method" value="X-ray"/>
    <property type="resolution" value="3.10 A"/>
    <property type="chains" value="B5/F8=1-96"/>
</dbReference>
<dbReference type="PDB" id="5EL7">
    <property type="method" value="X-ray"/>
    <property type="resolution" value="3.15 A"/>
    <property type="chains" value="B5/F8=1-96"/>
</dbReference>
<dbReference type="PDB" id="5F8K">
    <property type="method" value="X-ray"/>
    <property type="resolution" value="2.80 A"/>
    <property type="chains" value="1X/2X=1-95"/>
</dbReference>
<dbReference type="PDB" id="5FDU">
    <property type="method" value="X-ray"/>
    <property type="resolution" value="2.90 A"/>
    <property type="chains" value="1X/2X=1-95"/>
</dbReference>
<dbReference type="PDB" id="5FDV">
    <property type="method" value="X-ray"/>
    <property type="resolution" value="2.80 A"/>
    <property type="chains" value="1X/2X=1-95"/>
</dbReference>
<dbReference type="PDB" id="5HAU">
    <property type="method" value="X-ray"/>
    <property type="resolution" value="3.00 A"/>
    <property type="chains" value="1V/2V=1-96"/>
</dbReference>
<dbReference type="PDB" id="5HCP">
    <property type="method" value="X-ray"/>
    <property type="resolution" value="2.89 A"/>
    <property type="chains" value="1X/2X=1-96"/>
</dbReference>
<dbReference type="PDB" id="5HCQ">
    <property type="method" value="X-ray"/>
    <property type="resolution" value="2.80 A"/>
    <property type="chains" value="1X/2X=1-96"/>
</dbReference>
<dbReference type="PDB" id="5HCR">
    <property type="method" value="X-ray"/>
    <property type="resolution" value="2.80 A"/>
    <property type="chains" value="1X/2X=1-96"/>
</dbReference>
<dbReference type="PDB" id="5HD1">
    <property type="method" value="X-ray"/>
    <property type="resolution" value="2.70 A"/>
    <property type="chains" value="1X/2X=1-96"/>
</dbReference>
<dbReference type="PDB" id="5IB7">
    <property type="method" value="X-ray"/>
    <property type="resolution" value="2.99 A"/>
    <property type="chains" value="B5/F8=1-96"/>
</dbReference>
<dbReference type="PDB" id="5IB8">
    <property type="method" value="X-ray"/>
    <property type="resolution" value="3.13 A"/>
    <property type="chains" value="B5/F8=1-96"/>
</dbReference>
<dbReference type="PDB" id="5IBB">
    <property type="method" value="X-ray"/>
    <property type="resolution" value="2.96 A"/>
    <property type="chains" value="B5/F8=1-96"/>
</dbReference>
<dbReference type="PDB" id="5IMQ">
    <property type="method" value="EM"/>
    <property type="resolution" value="3.80 A"/>
    <property type="chains" value="p=1-96"/>
</dbReference>
<dbReference type="PDB" id="5IMR">
    <property type="method" value="EM"/>
    <property type="chains" value="p=1-96"/>
</dbReference>
<dbReference type="PDB" id="5J30">
    <property type="method" value="X-ray"/>
    <property type="resolution" value="3.20 A"/>
    <property type="chains" value="RX/YX=1-96"/>
</dbReference>
<dbReference type="PDB" id="5J3C">
    <property type="method" value="X-ray"/>
    <property type="resolution" value="3.04 A"/>
    <property type="chains" value="RX/YX=1-96"/>
</dbReference>
<dbReference type="PDB" id="5J4B">
    <property type="method" value="X-ray"/>
    <property type="resolution" value="2.60 A"/>
    <property type="chains" value="1X/2X=1-96"/>
</dbReference>
<dbReference type="PDB" id="5J4C">
    <property type="method" value="X-ray"/>
    <property type="resolution" value="2.80 A"/>
    <property type="chains" value="1X/2X=1-96"/>
</dbReference>
<dbReference type="PDB" id="5J8B">
    <property type="method" value="X-ray"/>
    <property type="resolution" value="2.60 A"/>
    <property type="chains" value="X=1-96"/>
</dbReference>
<dbReference type="PDB" id="5NDJ">
    <property type="method" value="X-ray"/>
    <property type="resolution" value="3.15 A"/>
    <property type="chains" value="B5/F8=1-96"/>
</dbReference>
<dbReference type="PDB" id="5NDK">
    <property type="method" value="X-ray"/>
    <property type="resolution" value="2.95 A"/>
    <property type="chains" value="B5/F8=1-96"/>
</dbReference>
<dbReference type="PDB" id="5OT7">
    <property type="method" value="EM"/>
    <property type="resolution" value="3.80 A"/>
    <property type="chains" value="y=3-95"/>
</dbReference>
<dbReference type="PDB" id="5UQ7">
    <property type="method" value="EM"/>
    <property type="resolution" value="3.50 A"/>
    <property type="chains" value="X=1-95"/>
</dbReference>
<dbReference type="PDB" id="5UQ8">
    <property type="method" value="EM"/>
    <property type="resolution" value="3.20 A"/>
    <property type="chains" value="X=1-95"/>
</dbReference>
<dbReference type="PDB" id="5VP2">
    <property type="method" value="X-ray"/>
    <property type="resolution" value="2.80 A"/>
    <property type="chains" value="1X/2X=1-96"/>
</dbReference>
<dbReference type="PDB" id="5VPO">
    <property type="method" value="X-ray"/>
    <property type="resolution" value="3.34 A"/>
    <property type="chains" value="RX/YX=1-96"/>
</dbReference>
<dbReference type="PDB" id="5VPP">
    <property type="method" value="X-ray"/>
    <property type="resolution" value="3.90 A"/>
    <property type="chains" value="RX/YX=1-96"/>
</dbReference>
<dbReference type="PDB" id="5W4K">
    <property type="method" value="X-ray"/>
    <property type="resolution" value="2.70 A"/>
    <property type="chains" value="1X/2X=1-96"/>
</dbReference>
<dbReference type="PDB" id="5WIS">
    <property type="method" value="X-ray"/>
    <property type="resolution" value="2.70 A"/>
    <property type="chains" value="1X/2X=1-96"/>
</dbReference>
<dbReference type="PDB" id="5WIT">
    <property type="method" value="X-ray"/>
    <property type="resolution" value="2.60 A"/>
    <property type="chains" value="1X/2X=1-96"/>
</dbReference>
<dbReference type="PDB" id="5ZLU">
    <property type="method" value="EM"/>
    <property type="resolution" value="3.60 A"/>
    <property type="chains" value="q=1-96"/>
</dbReference>
<dbReference type="PDB" id="6BUW">
    <property type="method" value="X-ray"/>
    <property type="resolution" value="3.50 A"/>
    <property type="chains" value="RX/YX=1-96"/>
</dbReference>
<dbReference type="PDB" id="6BZ6">
    <property type="method" value="X-ray"/>
    <property type="resolution" value="3.18 A"/>
    <property type="chains" value="RX/YX=1-96"/>
</dbReference>
<dbReference type="PDB" id="6BZ7">
    <property type="method" value="X-ray"/>
    <property type="resolution" value="3.68 A"/>
    <property type="chains" value="RX/YX=1-96"/>
</dbReference>
<dbReference type="PDB" id="6BZ8">
    <property type="method" value="X-ray"/>
    <property type="resolution" value="3.74 A"/>
    <property type="chains" value="RX/YX=1-96"/>
</dbReference>
<dbReference type="PDB" id="6C5L">
    <property type="method" value="X-ray"/>
    <property type="resolution" value="3.20 A"/>
    <property type="chains" value="BX/DX=1-96"/>
</dbReference>
<dbReference type="PDB" id="6CAE">
    <property type="method" value="X-ray"/>
    <property type="resolution" value="2.60 A"/>
    <property type="chains" value="1X/2X=1-96"/>
</dbReference>
<dbReference type="PDB" id="6CFJ">
    <property type="method" value="X-ray"/>
    <property type="resolution" value="2.80 A"/>
    <property type="chains" value="1X/2X=1-96"/>
</dbReference>
<dbReference type="PDB" id="6CFK">
    <property type="method" value="X-ray"/>
    <property type="resolution" value="2.70 A"/>
    <property type="chains" value="1X/2X=1-96"/>
</dbReference>
<dbReference type="PDB" id="6CFL">
    <property type="method" value="X-ray"/>
    <property type="resolution" value="2.60 A"/>
    <property type="chains" value="1X/2X=1-96"/>
</dbReference>
<dbReference type="PDB" id="6CZR">
    <property type="method" value="X-ray"/>
    <property type="resolution" value="3.14 A"/>
    <property type="chains" value="1X/2X=1-95"/>
</dbReference>
<dbReference type="PDB" id="6FKR">
    <property type="method" value="X-ray"/>
    <property type="resolution" value="3.20 A"/>
    <property type="chains" value="1X/2X=1-95"/>
</dbReference>
<dbReference type="PDB" id="6GSJ">
    <property type="method" value="X-ray"/>
    <property type="resolution" value="2.96 A"/>
    <property type="chains" value="B5/F8=1-96"/>
</dbReference>
<dbReference type="PDB" id="6GSK">
    <property type="method" value="X-ray"/>
    <property type="resolution" value="3.36 A"/>
    <property type="chains" value="B5/F8=1-96"/>
</dbReference>
<dbReference type="PDB" id="6GSL">
    <property type="method" value="X-ray"/>
    <property type="resolution" value="3.16 A"/>
    <property type="chains" value="B5/F8=1-96"/>
</dbReference>
<dbReference type="PDB" id="6GZQ">
    <property type="method" value="EM"/>
    <property type="resolution" value="3.28 A"/>
    <property type="chains" value="S1=3-94"/>
</dbReference>
<dbReference type="PDB" id="6GZX">
    <property type="method" value="EM"/>
    <property type="resolution" value="4.57 A"/>
    <property type="chains" value="S1/S2=3-94"/>
</dbReference>
<dbReference type="PDB" id="6GZZ">
    <property type="method" value="EM"/>
    <property type="resolution" value="4.13 A"/>
    <property type="chains" value="S1/S2=3-94"/>
</dbReference>
<dbReference type="PDB" id="6N9E">
    <property type="method" value="X-ray"/>
    <property type="resolution" value="3.70 A"/>
    <property type="chains" value="1X/2X=1-96"/>
</dbReference>
<dbReference type="PDB" id="6N9F">
    <property type="method" value="X-ray"/>
    <property type="resolution" value="3.70 A"/>
    <property type="chains" value="1X/2X=1-96"/>
</dbReference>
<dbReference type="PDB" id="6ND5">
    <property type="method" value="X-ray"/>
    <property type="resolution" value="2.60 A"/>
    <property type="chains" value="1X/2X=1-96"/>
</dbReference>
<dbReference type="PDB" id="6ND6">
    <property type="method" value="X-ray"/>
    <property type="resolution" value="2.85 A"/>
    <property type="chains" value="1X/2X=1-96"/>
</dbReference>
<dbReference type="PDB" id="6NDK">
    <property type="method" value="X-ray"/>
    <property type="resolution" value="3.64 A"/>
    <property type="chains" value="RX/YX=1-96"/>
</dbReference>
<dbReference type="PDB" id="6NSH">
    <property type="method" value="X-ray"/>
    <property type="resolution" value="3.40 A"/>
    <property type="chains" value="RX/YX=1-96"/>
</dbReference>
<dbReference type="PDB" id="6NTA">
    <property type="method" value="X-ray"/>
    <property type="resolution" value="3.10 A"/>
    <property type="chains" value="RX/YX=1-96"/>
</dbReference>
<dbReference type="PDB" id="6NUO">
    <property type="method" value="X-ray"/>
    <property type="resolution" value="3.20 A"/>
    <property type="chains" value="RX/YX=1-96"/>
</dbReference>
<dbReference type="PDB" id="6NWY">
    <property type="method" value="X-ray"/>
    <property type="resolution" value="3.50 A"/>
    <property type="chains" value="RX/YX=1-96"/>
</dbReference>
<dbReference type="PDB" id="6O3M">
    <property type="method" value="X-ray"/>
    <property type="resolution" value="3.97 A"/>
    <property type="chains" value="RX/YX=1-96"/>
</dbReference>
<dbReference type="PDB" id="6O97">
    <property type="method" value="X-ray"/>
    <property type="resolution" value="2.75 A"/>
    <property type="chains" value="1X/2X=1-96"/>
</dbReference>
<dbReference type="PDB" id="6OF1">
    <property type="method" value="X-ray"/>
    <property type="resolution" value="2.80 A"/>
    <property type="chains" value="1X/2X=1-96"/>
</dbReference>
<dbReference type="PDB" id="6OF6">
    <property type="method" value="X-ray"/>
    <property type="resolution" value="3.20 A"/>
    <property type="chains" value="RX/YX=1-96"/>
</dbReference>
<dbReference type="PDB" id="6OJ2">
    <property type="method" value="X-ray"/>
    <property type="resolution" value="3.20 A"/>
    <property type="chains" value="RX/YX=1-96"/>
</dbReference>
<dbReference type="PDB" id="6OPE">
    <property type="method" value="X-ray"/>
    <property type="resolution" value="3.10 A"/>
    <property type="chains" value="RX/YX=1-96"/>
</dbReference>
<dbReference type="PDB" id="6ORD">
    <property type="method" value="X-ray"/>
    <property type="resolution" value="3.10 A"/>
    <property type="chains" value="RX/YX=1-96"/>
</dbReference>
<dbReference type="PDB" id="6OSI">
    <property type="method" value="X-ray"/>
    <property type="resolution" value="4.14 A"/>
    <property type="chains" value="RX/YX=1-96"/>
</dbReference>
<dbReference type="PDB" id="6OTR">
    <property type="method" value="X-ray"/>
    <property type="resolution" value="3.12 A"/>
    <property type="chains" value="RX/YX=1-96"/>
</dbReference>
<dbReference type="PDB" id="6OXA">
    <property type="method" value="X-ray"/>
    <property type="resolution" value="3.25 A"/>
    <property type="chains" value="RX/YX=1-96"/>
</dbReference>
<dbReference type="PDB" id="6OXI">
    <property type="method" value="X-ray"/>
    <property type="resolution" value="3.50 A"/>
    <property type="chains" value="RX/YX=1-96"/>
</dbReference>
<dbReference type="PDB" id="6Q95">
    <property type="method" value="EM"/>
    <property type="resolution" value="3.70 A"/>
    <property type="chains" value="T=3-95"/>
</dbReference>
<dbReference type="PDB" id="6QNQ">
    <property type="method" value="X-ray"/>
    <property type="resolution" value="3.50 A"/>
    <property type="chains" value="B5/F8=1-96"/>
</dbReference>
<dbReference type="PDB" id="6QNR">
    <property type="method" value="X-ray"/>
    <property type="resolution" value="3.10 A"/>
    <property type="chains" value="B5/F8=1-96"/>
</dbReference>
<dbReference type="PDB" id="6UCQ">
    <property type="method" value="X-ray"/>
    <property type="resolution" value="3.50 A"/>
    <property type="chains" value="1X/2X=1-96"/>
</dbReference>
<dbReference type="PDB" id="6UO1">
    <property type="method" value="X-ray"/>
    <property type="resolution" value="2.95 A"/>
    <property type="chains" value="1X/2X=1-96"/>
</dbReference>
<dbReference type="PDB" id="6XHV">
    <property type="method" value="X-ray"/>
    <property type="resolution" value="2.40 A"/>
    <property type="chains" value="1X/2X=1-96"/>
</dbReference>
<dbReference type="PDB" id="6XHW">
    <property type="method" value="X-ray"/>
    <property type="resolution" value="2.50 A"/>
    <property type="chains" value="1X/2X=1-96"/>
</dbReference>
<dbReference type="PDB" id="6XHX">
    <property type="method" value="X-ray"/>
    <property type="resolution" value="2.55 A"/>
    <property type="chains" value="1X/2X=1-96"/>
</dbReference>
<dbReference type="PDB" id="6XHY">
    <property type="method" value="X-ray"/>
    <property type="resolution" value="2.60 A"/>
    <property type="chains" value="1X/2X=1-96"/>
</dbReference>
<dbReference type="PDB" id="6XQD">
    <property type="method" value="X-ray"/>
    <property type="resolution" value="2.80 A"/>
    <property type="chains" value="1X/2X=1-96"/>
</dbReference>
<dbReference type="PDB" id="6XQE">
    <property type="method" value="X-ray"/>
    <property type="resolution" value="3.00 A"/>
    <property type="chains" value="1X/2X=1-96"/>
</dbReference>
<dbReference type="PDB" id="7AZO">
    <property type="method" value="X-ray"/>
    <property type="resolution" value="3.30 A"/>
    <property type="chains" value="L23A/L23B=1-96"/>
</dbReference>
<dbReference type="PDB" id="7AZS">
    <property type="method" value="X-ray"/>
    <property type="resolution" value="3.10 A"/>
    <property type="chains" value="L23A/L23B=1-96"/>
</dbReference>
<dbReference type="PDB" id="7JQL">
    <property type="method" value="X-ray"/>
    <property type="resolution" value="3.00 A"/>
    <property type="chains" value="1X/2X=1-96"/>
</dbReference>
<dbReference type="PDB" id="7JQM">
    <property type="method" value="X-ray"/>
    <property type="resolution" value="3.05 A"/>
    <property type="chains" value="1X/2X=1-96"/>
</dbReference>
<dbReference type="PDB" id="7LH5">
    <property type="method" value="X-ray"/>
    <property type="resolution" value="3.27 A"/>
    <property type="chains" value="BX/DX=1-96"/>
</dbReference>
<dbReference type="PDB" id="7MD7">
    <property type="method" value="X-ray"/>
    <property type="resolution" value="2.80 A"/>
    <property type="chains" value="1X/2X=1-96"/>
</dbReference>
<dbReference type="PDB" id="7RQ8">
    <property type="method" value="X-ray"/>
    <property type="resolution" value="2.50 A"/>
    <property type="chains" value="1X/2X=1-96"/>
</dbReference>
<dbReference type="PDB" id="7RQ9">
    <property type="method" value="X-ray"/>
    <property type="resolution" value="2.60 A"/>
    <property type="chains" value="1X/2X=1-96"/>
</dbReference>
<dbReference type="PDB" id="7RQA">
    <property type="method" value="X-ray"/>
    <property type="resolution" value="2.40 A"/>
    <property type="chains" value="1X/2X=1-96"/>
</dbReference>
<dbReference type="PDB" id="7RQB">
    <property type="method" value="X-ray"/>
    <property type="resolution" value="2.45 A"/>
    <property type="chains" value="1X/2X=1-96"/>
</dbReference>
<dbReference type="PDB" id="7RQC">
    <property type="method" value="X-ray"/>
    <property type="resolution" value="2.50 A"/>
    <property type="chains" value="1X/2X=1-96"/>
</dbReference>
<dbReference type="PDB" id="7RQD">
    <property type="method" value="X-ray"/>
    <property type="resolution" value="2.50 A"/>
    <property type="chains" value="1X/2X=1-96"/>
</dbReference>
<dbReference type="PDB" id="7RQE">
    <property type="method" value="X-ray"/>
    <property type="resolution" value="2.40 A"/>
    <property type="chains" value="1X/2X=1-96"/>
</dbReference>
<dbReference type="PDB" id="7U2H">
    <property type="method" value="X-ray"/>
    <property type="resolution" value="2.55 A"/>
    <property type="chains" value="1X/2X=1-96"/>
</dbReference>
<dbReference type="PDB" id="7U2I">
    <property type="method" value="X-ray"/>
    <property type="resolution" value="2.55 A"/>
    <property type="chains" value="1X/2X=1-96"/>
</dbReference>
<dbReference type="PDB" id="7U2J">
    <property type="method" value="X-ray"/>
    <property type="resolution" value="2.55 A"/>
    <property type="chains" value="1X/2X=1-96"/>
</dbReference>
<dbReference type="PDB" id="8CVJ">
    <property type="method" value="X-ray"/>
    <property type="resolution" value="2.40 A"/>
    <property type="chains" value="1X/2X=1-96"/>
</dbReference>
<dbReference type="PDB" id="8CVK">
    <property type="method" value="X-ray"/>
    <property type="resolution" value="2.50 A"/>
    <property type="chains" value="1X/2X=1-96"/>
</dbReference>
<dbReference type="PDB" id="8CVL">
    <property type="method" value="X-ray"/>
    <property type="resolution" value="2.30 A"/>
    <property type="chains" value="1X/2X=1-96"/>
</dbReference>
<dbReference type="PDB" id="8EKB">
    <property type="method" value="X-ray"/>
    <property type="resolution" value="2.70 A"/>
    <property type="chains" value="1X/2X=1-96"/>
</dbReference>
<dbReference type="PDB" id="8EV6">
    <property type="method" value="X-ray"/>
    <property type="resolution" value="2.95 A"/>
    <property type="chains" value="1X/2X=1-96"/>
</dbReference>
<dbReference type="PDB" id="8EV7">
    <property type="method" value="X-ray"/>
    <property type="resolution" value="2.89 A"/>
    <property type="chains" value="1X/2X=1-96"/>
</dbReference>
<dbReference type="PDB" id="8FC1">
    <property type="method" value="X-ray"/>
    <property type="resolution" value="2.50 A"/>
    <property type="chains" value="1X/2X=1-96"/>
</dbReference>
<dbReference type="PDB" id="8FC2">
    <property type="method" value="X-ray"/>
    <property type="resolution" value="2.50 A"/>
    <property type="chains" value="1X/2X=1-96"/>
</dbReference>
<dbReference type="PDB" id="8FC3">
    <property type="method" value="X-ray"/>
    <property type="resolution" value="2.60 A"/>
    <property type="chains" value="1X/2X=1-96"/>
</dbReference>
<dbReference type="PDB" id="8FC4">
    <property type="method" value="X-ray"/>
    <property type="resolution" value="2.45 A"/>
    <property type="chains" value="1X/2X=1-96"/>
</dbReference>
<dbReference type="PDB" id="8FC5">
    <property type="method" value="X-ray"/>
    <property type="resolution" value="2.65 A"/>
    <property type="chains" value="1X/2X=1-96"/>
</dbReference>
<dbReference type="PDB" id="8FC6">
    <property type="method" value="X-ray"/>
    <property type="resolution" value="2.35 A"/>
    <property type="chains" value="1X/2X=1-96"/>
</dbReference>
<dbReference type="PDB" id="8FOM">
    <property type="method" value="X-ray"/>
    <property type="resolution" value="3.58 A"/>
    <property type="chains" value="RX/YX=1-96"/>
</dbReference>
<dbReference type="PDB" id="8FON">
    <property type="method" value="X-ray"/>
    <property type="resolution" value="3.64 A"/>
    <property type="chains" value="RX/YX=1-96"/>
</dbReference>
<dbReference type="PDB" id="8G29">
    <property type="method" value="X-ray"/>
    <property type="resolution" value="2.55 A"/>
    <property type="chains" value="1X/2X=1-96"/>
</dbReference>
<dbReference type="PDB" id="8G2A">
    <property type="method" value="X-ray"/>
    <property type="resolution" value="2.45 A"/>
    <property type="chains" value="1X/2X=1-96"/>
</dbReference>
<dbReference type="PDB" id="8G2B">
    <property type="method" value="X-ray"/>
    <property type="resolution" value="2.55 A"/>
    <property type="chains" value="1X/2X=1-96"/>
</dbReference>
<dbReference type="PDB" id="8G2C">
    <property type="method" value="X-ray"/>
    <property type="resolution" value="2.65 A"/>
    <property type="chains" value="1X/2X=1-96"/>
</dbReference>
<dbReference type="PDB" id="8G2D">
    <property type="method" value="X-ray"/>
    <property type="resolution" value="2.70 A"/>
    <property type="chains" value="1X/2X=1-96"/>
</dbReference>
<dbReference type="PDB" id="8T8B">
    <property type="method" value="X-ray"/>
    <property type="resolution" value="2.65 A"/>
    <property type="chains" value="1X/2X=1-96"/>
</dbReference>
<dbReference type="PDB" id="8T8C">
    <property type="method" value="X-ray"/>
    <property type="resolution" value="2.60 A"/>
    <property type="chains" value="1X/2X=1-96"/>
</dbReference>
<dbReference type="PDB" id="8UD6">
    <property type="method" value="X-ray"/>
    <property type="resolution" value="2.70 A"/>
    <property type="chains" value="1X/2X=1-96"/>
</dbReference>
<dbReference type="PDB" id="8UD7">
    <property type="method" value="X-ray"/>
    <property type="resolution" value="2.55 A"/>
    <property type="chains" value="1X/2X=1-96"/>
</dbReference>
<dbReference type="PDB" id="8UD8">
    <property type="method" value="X-ray"/>
    <property type="resolution" value="2.60 A"/>
    <property type="chains" value="1X/2X=1-96"/>
</dbReference>
<dbReference type="PDB" id="8UVR">
    <property type="method" value="X-ray"/>
    <property type="resolution" value="2.60 A"/>
    <property type="chains" value="1X/2X=1-96"/>
</dbReference>
<dbReference type="PDB" id="8UVS">
    <property type="method" value="X-ray"/>
    <property type="resolution" value="2.75 A"/>
    <property type="chains" value="1X/2X=1-96"/>
</dbReference>
<dbReference type="PDB" id="8VTU">
    <property type="method" value="X-ray"/>
    <property type="resolution" value="2.40 A"/>
    <property type="chains" value="1X/2X=1-96"/>
</dbReference>
<dbReference type="PDB" id="8VTV">
    <property type="method" value="X-ray"/>
    <property type="resolution" value="2.55 A"/>
    <property type="chains" value="1X/2X=1-96"/>
</dbReference>
<dbReference type="PDB" id="8VTW">
    <property type="method" value="X-ray"/>
    <property type="resolution" value="2.35 A"/>
    <property type="chains" value="1X/2X=1-96"/>
</dbReference>
<dbReference type="PDB" id="8VTX">
    <property type="method" value="X-ray"/>
    <property type="resolution" value="2.40 A"/>
    <property type="chains" value="1X/2X=1-96"/>
</dbReference>
<dbReference type="PDB" id="8VTY">
    <property type="method" value="X-ray"/>
    <property type="resolution" value="2.60 A"/>
    <property type="chains" value="1X/2X=1-96"/>
</dbReference>
<dbReference type="PDB" id="8WV1">
    <property type="method" value="X-ray"/>
    <property type="resolution" value="3.99 A"/>
    <property type="chains" value="S/s=1-96"/>
</dbReference>
<dbReference type="PDB" id="9B00">
    <property type="method" value="X-ray"/>
    <property type="resolution" value="2.80 A"/>
    <property type="chains" value="1X/2X=1-96"/>
</dbReference>
<dbReference type="PDB" id="9D0J">
    <property type="method" value="X-ray"/>
    <property type="resolution" value="2.50 A"/>
    <property type="chains" value="1X/2X=1-96"/>
</dbReference>
<dbReference type="PDB" id="9D7R">
    <property type="method" value="X-ray"/>
    <property type="resolution" value="2.70 A"/>
    <property type="chains" value="1X/2X=1-96"/>
</dbReference>
<dbReference type="PDB" id="9D7S">
    <property type="method" value="X-ray"/>
    <property type="resolution" value="2.85 A"/>
    <property type="chains" value="1X/2X=1-96"/>
</dbReference>
<dbReference type="PDB" id="9D7T">
    <property type="method" value="X-ray"/>
    <property type="resolution" value="2.70 A"/>
    <property type="chains" value="1X/2X=1-96"/>
</dbReference>
<dbReference type="PDB" id="9DFC">
    <property type="method" value="X-ray"/>
    <property type="resolution" value="2.50 A"/>
    <property type="chains" value="1X/2X=1-96"/>
</dbReference>
<dbReference type="PDB" id="9DFD">
    <property type="method" value="X-ray"/>
    <property type="resolution" value="2.60 A"/>
    <property type="chains" value="1X/2X=1-96"/>
</dbReference>
<dbReference type="PDB" id="9DFE">
    <property type="method" value="X-ray"/>
    <property type="resolution" value="2.60 A"/>
    <property type="chains" value="1X/2X=1-96"/>
</dbReference>
<dbReference type="PDBsum" id="1VVJ"/>
<dbReference type="PDBsum" id="1VY4"/>
<dbReference type="PDBsum" id="1VY5"/>
<dbReference type="PDBsum" id="1VY6"/>
<dbReference type="PDBsum" id="1VY7"/>
<dbReference type="PDBsum" id="4L47"/>
<dbReference type="PDBsum" id="4L71"/>
<dbReference type="PDBsum" id="4LEL"/>
<dbReference type="PDBsum" id="4LFZ"/>
<dbReference type="PDBsum" id="4LNT"/>
<dbReference type="PDBsum" id="4LSK"/>
<dbReference type="PDBsum" id="4LT8"/>
<dbReference type="PDBsum" id="4P6F"/>
<dbReference type="PDBsum" id="4P70"/>
<dbReference type="PDBsum" id="4TUA"/>
<dbReference type="PDBsum" id="4TUB"/>
<dbReference type="PDBsum" id="4TUC"/>
<dbReference type="PDBsum" id="4TUD"/>
<dbReference type="PDBsum" id="4TUE"/>
<dbReference type="PDBsum" id="4V42"/>
<dbReference type="PDBsum" id="4V4P"/>
<dbReference type="PDBsum" id="4V51"/>
<dbReference type="PDBsum" id="4V5A"/>
<dbReference type="PDBsum" id="4V5C"/>
<dbReference type="PDBsum" id="4V5D"/>
<dbReference type="PDBsum" id="4V5E"/>
<dbReference type="PDBsum" id="4V5F"/>
<dbReference type="PDBsum" id="4V5G"/>
<dbReference type="PDBsum" id="4V5J"/>
<dbReference type="PDBsum" id="4V5K"/>
<dbReference type="PDBsum" id="4V5L"/>
<dbReference type="PDBsum" id="4V5M"/>
<dbReference type="PDBsum" id="4V5N"/>
<dbReference type="PDBsum" id="4V5P"/>
<dbReference type="PDBsum" id="4V5Q"/>
<dbReference type="PDBsum" id="4V5R"/>
<dbReference type="PDBsum" id="4V5S"/>
<dbReference type="PDBsum" id="4V68"/>
<dbReference type="PDBsum" id="4V6A"/>
<dbReference type="PDBsum" id="4V6F"/>
<dbReference type="PDBsum" id="4V6G"/>
<dbReference type="PDBsum" id="4V7J"/>
<dbReference type="PDBsum" id="4V7K"/>
<dbReference type="PDBsum" id="4V7L"/>
<dbReference type="PDBsum" id="4V7M"/>
<dbReference type="PDBsum" id="4V7W"/>
<dbReference type="PDBsum" id="4V7X"/>
<dbReference type="PDBsum" id="4V7Y"/>
<dbReference type="PDBsum" id="4V7Z"/>
<dbReference type="PDBsum" id="4V87"/>
<dbReference type="PDBsum" id="4V8A"/>
<dbReference type="PDBsum" id="4V8B"/>
<dbReference type="PDBsum" id="4V8C"/>
<dbReference type="PDBsum" id="4V8D"/>
<dbReference type="PDBsum" id="4V8E"/>
<dbReference type="PDBsum" id="4V8F"/>
<dbReference type="PDBsum" id="4V8G"/>
<dbReference type="PDBsum" id="4V8H"/>
<dbReference type="PDBsum" id="4V8I"/>
<dbReference type="PDBsum" id="4V8J"/>
<dbReference type="PDBsum" id="4V8N"/>
<dbReference type="PDBsum" id="4V8O"/>
<dbReference type="PDBsum" id="4V8Q"/>
<dbReference type="PDBsum" id="4V8U"/>
<dbReference type="PDBsum" id="4V8X"/>
<dbReference type="PDBsum" id="4V90"/>
<dbReference type="PDBsum" id="4V95"/>
<dbReference type="PDBsum" id="4V97"/>
<dbReference type="PDBsum" id="4V9A"/>
<dbReference type="PDBsum" id="4V9B"/>
<dbReference type="PDBsum" id="4V9H"/>
<dbReference type="PDBsum" id="4V9I"/>
<dbReference type="PDBsum" id="4V9R"/>
<dbReference type="PDBsum" id="4V9S"/>
<dbReference type="PDBsum" id="4W2E"/>
<dbReference type="PDBsum" id="4W2F"/>
<dbReference type="PDBsum" id="4W2G"/>
<dbReference type="PDBsum" id="4W2H"/>
<dbReference type="PDBsum" id="4W2I"/>
<dbReference type="PDBsum" id="4W4G"/>
<dbReference type="PDBsum" id="4WPO"/>
<dbReference type="PDBsum" id="4WQ1"/>
<dbReference type="PDBsum" id="4WQF"/>
<dbReference type="PDBsum" id="4WQR"/>
<dbReference type="PDBsum" id="4WQU"/>
<dbReference type="PDBsum" id="4WQY"/>
<dbReference type="PDBsum" id="4WR6"/>
<dbReference type="PDBsum" id="4WRA"/>
<dbReference type="PDBsum" id="4WRO"/>
<dbReference type="PDBsum" id="4WSD"/>
<dbReference type="PDBsum" id="4WSM"/>
<dbReference type="PDBsum" id="4WT1"/>
<dbReference type="PDBsum" id="4WT8"/>
<dbReference type="PDBsum" id="4WU1"/>
<dbReference type="PDBsum" id="4WZD"/>
<dbReference type="PDBsum" id="4WZO"/>
<dbReference type="PDBsum" id="4Y4O"/>
<dbReference type="PDBsum" id="4Y4P"/>
<dbReference type="PDBsum" id="4YPB"/>
<dbReference type="PDBsum" id="4YZV"/>
<dbReference type="PDBsum" id="4Z3S"/>
<dbReference type="PDBsum" id="4Z8C"/>
<dbReference type="PDBsum" id="4ZER"/>
<dbReference type="PDBsum" id="4ZSN"/>
<dbReference type="PDBsum" id="5A9Z"/>
<dbReference type="PDBsum" id="5AA0"/>
<dbReference type="PDBsum" id="5CZP"/>
<dbReference type="PDBsum" id="5D8B"/>
<dbReference type="PDBsum" id="5DFE"/>
<dbReference type="PDBsum" id="5DOX"/>
<dbReference type="PDBsum" id="5DOY"/>
<dbReference type="PDBsum" id="5E7K"/>
<dbReference type="PDBsum" id="5E81"/>
<dbReference type="PDBsum" id="5EL4"/>
<dbReference type="PDBsum" id="5EL5"/>
<dbReference type="PDBsum" id="5EL6"/>
<dbReference type="PDBsum" id="5EL7"/>
<dbReference type="PDBsum" id="5F8K"/>
<dbReference type="PDBsum" id="5FDU"/>
<dbReference type="PDBsum" id="5FDV"/>
<dbReference type="PDBsum" id="5HAU"/>
<dbReference type="PDBsum" id="5HCP"/>
<dbReference type="PDBsum" id="5HCQ"/>
<dbReference type="PDBsum" id="5HCR"/>
<dbReference type="PDBsum" id="5HD1"/>
<dbReference type="PDBsum" id="5IB7"/>
<dbReference type="PDBsum" id="5IB8"/>
<dbReference type="PDBsum" id="5IBB"/>
<dbReference type="PDBsum" id="5IMQ"/>
<dbReference type="PDBsum" id="5IMR"/>
<dbReference type="PDBsum" id="5J30"/>
<dbReference type="PDBsum" id="5J3C"/>
<dbReference type="PDBsum" id="5J4B"/>
<dbReference type="PDBsum" id="5J4C"/>
<dbReference type="PDBsum" id="5J8B"/>
<dbReference type="PDBsum" id="5NDJ"/>
<dbReference type="PDBsum" id="5NDK"/>
<dbReference type="PDBsum" id="5OT7"/>
<dbReference type="PDBsum" id="5UQ7"/>
<dbReference type="PDBsum" id="5UQ8"/>
<dbReference type="PDBsum" id="5VP2"/>
<dbReference type="PDBsum" id="5VPO"/>
<dbReference type="PDBsum" id="5VPP"/>
<dbReference type="PDBsum" id="5W4K"/>
<dbReference type="PDBsum" id="5WIS"/>
<dbReference type="PDBsum" id="5WIT"/>
<dbReference type="PDBsum" id="5ZLU"/>
<dbReference type="PDBsum" id="6BUW"/>
<dbReference type="PDBsum" id="6BZ6"/>
<dbReference type="PDBsum" id="6BZ7"/>
<dbReference type="PDBsum" id="6BZ8"/>
<dbReference type="PDBsum" id="6C5L"/>
<dbReference type="PDBsum" id="6CAE"/>
<dbReference type="PDBsum" id="6CFJ"/>
<dbReference type="PDBsum" id="6CFK"/>
<dbReference type="PDBsum" id="6CFL"/>
<dbReference type="PDBsum" id="6CZR"/>
<dbReference type="PDBsum" id="6FKR"/>
<dbReference type="PDBsum" id="6GSJ"/>
<dbReference type="PDBsum" id="6GSK"/>
<dbReference type="PDBsum" id="6GSL"/>
<dbReference type="PDBsum" id="6GZQ"/>
<dbReference type="PDBsum" id="6GZX"/>
<dbReference type="PDBsum" id="6GZZ"/>
<dbReference type="PDBsum" id="6N9E"/>
<dbReference type="PDBsum" id="6N9F"/>
<dbReference type="PDBsum" id="6ND5"/>
<dbReference type="PDBsum" id="6ND6"/>
<dbReference type="PDBsum" id="6NDK"/>
<dbReference type="PDBsum" id="6NSH"/>
<dbReference type="PDBsum" id="6NTA"/>
<dbReference type="PDBsum" id="6NUO"/>
<dbReference type="PDBsum" id="6NWY"/>
<dbReference type="PDBsum" id="6O3M"/>
<dbReference type="PDBsum" id="6O97"/>
<dbReference type="PDBsum" id="6OF1"/>
<dbReference type="PDBsum" id="6OF6"/>
<dbReference type="PDBsum" id="6OJ2"/>
<dbReference type="PDBsum" id="6OPE"/>
<dbReference type="PDBsum" id="6ORD"/>
<dbReference type="PDBsum" id="6OSI"/>
<dbReference type="PDBsum" id="6OTR"/>
<dbReference type="PDBsum" id="6OXA"/>
<dbReference type="PDBsum" id="6OXI"/>
<dbReference type="PDBsum" id="6Q95"/>
<dbReference type="PDBsum" id="6QNQ"/>
<dbReference type="PDBsum" id="6QNR"/>
<dbReference type="PDBsum" id="6UCQ"/>
<dbReference type="PDBsum" id="6UO1"/>
<dbReference type="PDBsum" id="6XHV"/>
<dbReference type="PDBsum" id="6XHW"/>
<dbReference type="PDBsum" id="6XHX"/>
<dbReference type="PDBsum" id="6XHY"/>
<dbReference type="PDBsum" id="6XQD"/>
<dbReference type="PDBsum" id="6XQE"/>
<dbReference type="PDBsum" id="7AZO"/>
<dbReference type="PDBsum" id="7AZS"/>
<dbReference type="PDBsum" id="7JQL"/>
<dbReference type="PDBsum" id="7JQM"/>
<dbReference type="PDBsum" id="7LH5"/>
<dbReference type="PDBsum" id="7MD7"/>
<dbReference type="PDBsum" id="7RQ8"/>
<dbReference type="PDBsum" id="7RQ9"/>
<dbReference type="PDBsum" id="7RQA"/>
<dbReference type="PDBsum" id="7RQB"/>
<dbReference type="PDBsum" id="7RQC"/>
<dbReference type="PDBsum" id="7RQD"/>
<dbReference type="PDBsum" id="7RQE"/>
<dbReference type="PDBsum" id="7U2H"/>
<dbReference type="PDBsum" id="7U2I"/>
<dbReference type="PDBsum" id="7U2J"/>
<dbReference type="PDBsum" id="8CVJ"/>
<dbReference type="PDBsum" id="8CVK"/>
<dbReference type="PDBsum" id="8CVL"/>
<dbReference type="PDBsum" id="8EKB"/>
<dbReference type="PDBsum" id="8EV6"/>
<dbReference type="PDBsum" id="8EV7"/>
<dbReference type="PDBsum" id="8FC1"/>
<dbReference type="PDBsum" id="8FC2"/>
<dbReference type="PDBsum" id="8FC3"/>
<dbReference type="PDBsum" id="8FC4"/>
<dbReference type="PDBsum" id="8FC5"/>
<dbReference type="PDBsum" id="8FC6"/>
<dbReference type="PDBsum" id="8FOM"/>
<dbReference type="PDBsum" id="8FON"/>
<dbReference type="PDBsum" id="8G29"/>
<dbReference type="PDBsum" id="8G2A"/>
<dbReference type="PDBsum" id="8G2B"/>
<dbReference type="PDBsum" id="8G2C"/>
<dbReference type="PDBsum" id="8G2D"/>
<dbReference type="PDBsum" id="8T8B"/>
<dbReference type="PDBsum" id="8T8C"/>
<dbReference type="PDBsum" id="8UD6"/>
<dbReference type="PDBsum" id="8UD7"/>
<dbReference type="PDBsum" id="8UD8"/>
<dbReference type="PDBsum" id="8UVR"/>
<dbReference type="PDBsum" id="8UVS"/>
<dbReference type="PDBsum" id="8VTU"/>
<dbReference type="PDBsum" id="8VTV"/>
<dbReference type="PDBsum" id="8VTW"/>
<dbReference type="PDBsum" id="8VTX"/>
<dbReference type="PDBsum" id="8VTY"/>
<dbReference type="PDBsum" id="8WV1"/>
<dbReference type="PDBsum" id="9B00"/>
<dbReference type="PDBsum" id="9D0J"/>
<dbReference type="PDBsum" id="9D7R"/>
<dbReference type="PDBsum" id="9D7S"/>
<dbReference type="PDBsum" id="9D7T"/>
<dbReference type="PDBsum" id="9DFC"/>
<dbReference type="PDBsum" id="9DFD"/>
<dbReference type="PDBsum" id="9DFE"/>
<dbReference type="BMRB" id="Q5SHP0"/>
<dbReference type="EMDB" id="EMD-0101"/>
<dbReference type="EMDB" id="EMD-0104"/>
<dbReference type="EMDB" id="EMD-0105"/>
<dbReference type="EMDB" id="EMD-3852"/>
<dbReference type="EMDB" id="EMD-4475"/>
<dbReference type="EMDB" id="EMD-6934"/>
<dbReference type="EMDB" id="EMD-8596"/>
<dbReference type="EMDB" id="EMD-8597"/>
<dbReference type="SMR" id="Q5SHP0"/>
<dbReference type="IntAct" id="Q5SHP0">
    <property type="interactions" value="7"/>
</dbReference>
<dbReference type="EnsemblBacteria" id="BAD71513">
    <property type="protein sequence ID" value="BAD71513"/>
    <property type="gene ID" value="BAD71513"/>
</dbReference>
<dbReference type="GeneID" id="3168722"/>
<dbReference type="KEGG" id="ttj:TTHA1690"/>
<dbReference type="PATRIC" id="fig|300852.9.peg.1660"/>
<dbReference type="eggNOG" id="COG0089">
    <property type="taxonomic scope" value="Bacteria"/>
</dbReference>
<dbReference type="HOGENOM" id="CLU_037562_3_2_0"/>
<dbReference type="PhylomeDB" id="Q5SHP0"/>
<dbReference type="Proteomes" id="UP000000532">
    <property type="component" value="Chromosome"/>
</dbReference>
<dbReference type="GO" id="GO:1990904">
    <property type="term" value="C:ribonucleoprotein complex"/>
    <property type="evidence" value="ECO:0007669"/>
    <property type="project" value="UniProtKB-KW"/>
</dbReference>
<dbReference type="GO" id="GO:0005840">
    <property type="term" value="C:ribosome"/>
    <property type="evidence" value="ECO:0007669"/>
    <property type="project" value="UniProtKB-KW"/>
</dbReference>
<dbReference type="GO" id="GO:0019843">
    <property type="term" value="F:rRNA binding"/>
    <property type="evidence" value="ECO:0007669"/>
    <property type="project" value="UniProtKB-UniRule"/>
</dbReference>
<dbReference type="GO" id="GO:0003735">
    <property type="term" value="F:structural constituent of ribosome"/>
    <property type="evidence" value="ECO:0007669"/>
    <property type="project" value="InterPro"/>
</dbReference>
<dbReference type="GO" id="GO:0006412">
    <property type="term" value="P:translation"/>
    <property type="evidence" value="ECO:0007669"/>
    <property type="project" value="UniProtKB-UniRule"/>
</dbReference>
<dbReference type="FunFam" id="3.30.70.330:FF:000001">
    <property type="entry name" value="50S ribosomal protein L23"/>
    <property type="match status" value="1"/>
</dbReference>
<dbReference type="Gene3D" id="3.30.70.330">
    <property type="match status" value="1"/>
</dbReference>
<dbReference type="HAMAP" id="MF_01369_B">
    <property type="entry name" value="Ribosomal_uL23_B"/>
    <property type="match status" value="1"/>
</dbReference>
<dbReference type="InterPro" id="IPR012677">
    <property type="entry name" value="Nucleotide-bd_a/b_plait_sf"/>
</dbReference>
<dbReference type="InterPro" id="IPR013025">
    <property type="entry name" value="Ribosomal_uL23-like"/>
</dbReference>
<dbReference type="InterPro" id="IPR012678">
    <property type="entry name" value="Ribosomal_uL23/eL15/eS24_sf"/>
</dbReference>
<dbReference type="NCBIfam" id="NF004359">
    <property type="entry name" value="PRK05738.1-3"/>
    <property type="match status" value="1"/>
</dbReference>
<dbReference type="NCBIfam" id="NF004363">
    <property type="entry name" value="PRK05738.2-4"/>
    <property type="match status" value="1"/>
</dbReference>
<dbReference type="NCBIfam" id="NF004366">
    <property type="entry name" value="PRK05738.3-2"/>
    <property type="match status" value="1"/>
</dbReference>
<dbReference type="PANTHER" id="PTHR11620">
    <property type="entry name" value="60S RIBOSOMAL PROTEIN L23A"/>
    <property type="match status" value="1"/>
</dbReference>
<dbReference type="Pfam" id="PF00276">
    <property type="entry name" value="Ribosomal_L23"/>
    <property type="match status" value="1"/>
</dbReference>
<dbReference type="SUPFAM" id="SSF54189">
    <property type="entry name" value="Ribosomal proteins S24e, L23 and L15e"/>
    <property type="match status" value="1"/>
</dbReference>
<feature type="chain" id="PRO_0000129427" description="Large ribosomal subunit protein uL23">
    <location>
        <begin position="1"/>
        <end position="96"/>
    </location>
</feature>
<feature type="sequence conflict" description="In Ref. 2; AA sequence." evidence="4" ref="2">
    <original>Y</original>
    <variation>R</variation>
    <location>
        <position position="18"/>
    </location>
</feature>
<feature type="turn" evidence="5">
    <location>
        <begin position="5"/>
        <end position="7"/>
    </location>
</feature>
<feature type="helix" evidence="5">
    <location>
        <begin position="15"/>
        <end position="19"/>
    </location>
</feature>
<feature type="turn" evidence="5">
    <location>
        <begin position="20"/>
        <end position="24"/>
    </location>
</feature>
<feature type="strand" evidence="5">
    <location>
        <begin position="25"/>
        <end position="30"/>
    </location>
</feature>
<feature type="helix" evidence="5">
    <location>
        <begin position="36"/>
        <end position="47"/>
    </location>
</feature>
<feature type="strand" evidence="5">
    <location>
        <begin position="51"/>
        <end position="59"/>
    </location>
</feature>
<feature type="strand" evidence="5">
    <location>
        <begin position="63"/>
        <end position="66"/>
    </location>
</feature>
<feature type="strand" evidence="5">
    <location>
        <begin position="69"/>
        <end position="72"/>
    </location>
</feature>
<feature type="strand" evidence="5">
    <location>
        <begin position="76"/>
        <end position="83"/>
    </location>
</feature>
<feature type="helix" evidence="5">
    <location>
        <begin position="90"/>
        <end position="93"/>
    </location>
</feature>